<comment type="function">
    <text evidence="1 2">Proprotein convertase involved in the processing of hormone and other protein precursors at sites comprised of pairs of basic amino acid residues. In males, important for ADAM2 processing as well as other acrosomal proteins with roles in fertilization and critical for normal fertilization events such as sperm capacitation, acrosome reaction and binding of sperm to zona pellucida (By similarity). Plays also a role in female fertility, involved in the regulation of trophoblast migration and placental development, may be through the proteolytical processing and activation of proteins such as IGF2 (By similarity). May also participate in folliculogenesis in the ovaries (By similarity).</text>
</comment>
<comment type="subunit">
    <text evidence="2">The proPCSK4 form interacts with HSPA5; the interaction takes place at the endoplasmic reticulum.</text>
</comment>
<comment type="subcellular location">
    <subcellularLocation>
        <location evidence="10">Cytoplasmic vesicle</location>
        <location evidence="10">Secretory vesicle</location>
        <location evidence="10">Acrosome membrane</location>
    </subcellularLocation>
</comment>
<comment type="alternative products">
    <event type="alternative splicing"/>
    <isoform>
        <id>Q78EH2-1</id>
        <name>1</name>
        <sequence type="displayed"/>
    </isoform>
    <isoform>
        <id>Q78EH2-2</id>
        <name>2</name>
        <sequence type="described" ref="VSP_011273"/>
    </isoform>
    <isoform>
        <id>Q78EH2-3</id>
        <name>3</name>
        <name>rPC4-A</name>
        <sequence type="described" ref="VSP_011274"/>
    </isoform>
    <isoform>
        <id>Q78EH2-4</id>
        <name>4</name>
        <name>rPC4-B</name>
        <sequence type="described" ref="VSP_011275"/>
    </isoform>
    <isoform>
        <id>Q78EH2-5</id>
        <name>5</name>
        <name>rPC4-C</name>
        <sequence type="described" ref="VSP_011276"/>
    </isoform>
</comment>
<comment type="tissue specificity">
    <text evidence="6">Expressed abundantly in the testis. High levels seen in germ cells but not in Leydig, Sertoli or peritubular cells. Expressed in the pachytene spermatocytes and the round spermatids but not in the elongating spermatids. May be expressed within hormonally stimulated ovaries.</text>
</comment>
<comment type="developmental stage">
    <text evidence="6">First expressed postnatally between days 19 and 22 coinciding with the early stages of spermiogenesis. The levels increase up to postnatal day 60.</text>
</comment>
<comment type="PTM">
    <text evidence="2">N-glycosylated.</text>
</comment>
<comment type="PTM">
    <text evidence="2">Synthesized in the endoplasmic reticulum as a zymogen, is matured by autocatalytic cleavage between the prodomain and the catalytic domain.</text>
</comment>
<comment type="similarity">
    <text evidence="9">Belongs to the peptidase S8 family. Furin subfamily.</text>
</comment>
<accession>Q78EH2</accession>
<accession>A1A4C9</accession>
<accession>Q07213</accession>
<accession>Q07214</accession>
<organism>
    <name type="scientific">Rattus norvegicus</name>
    <name type="common">Rat</name>
    <dbReference type="NCBI Taxonomy" id="10116"/>
    <lineage>
        <taxon>Eukaryota</taxon>
        <taxon>Metazoa</taxon>
        <taxon>Chordata</taxon>
        <taxon>Craniata</taxon>
        <taxon>Vertebrata</taxon>
        <taxon>Euteleostomi</taxon>
        <taxon>Mammalia</taxon>
        <taxon>Eutheria</taxon>
        <taxon>Euarchontoglires</taxon>
        <taxon>Glires</taxon>
        <taxon>Rodentia</taxon>
        <taxon>Myomorpha</taxon>
        <taxon>Muroidea</taxon>
        <taxon>Muridae</taxon>
        <taxon>Murinae</taxon>
        <taxon>Rattus</taxon>
    </lineage>
</organism>
<proteinExistence type="evidence at transcript level"/>
<name>PCSK4_RAT</name>
<evidence type="ECO:0000250" key="1">
    <source>
        <dbReference type="UniProtKB" id="P29121"/>
    </source>
</evidence>
<evidence type="ECO:0000250" key="2">
    <source>
        <dbReference type="UniProtKB" id="Q6UW60"/>
    </source>
</evidence>
<evidence type="ECO:0000255" key="3"/>
<evidence type="ECO:0000255" key="4">
    <source>
        <dbReference type="PROSITE-ProRule" id="PRU01173"/>
    </source>
</evidence>
<evidence type="ECO:0000255" key="5">
    <source>
        <dbReference type="PROSITE-ProRule" id="PRU01240"/>
    </source>
</evidence>
<evidence type="ECO:0000269" key="6">
    <source>
    </source>
</evidence>
<evidence type="ECO:0000303" key="7">
    <source>
    </source>
</evidence>
<evidence type="ECO:0000303" key="8">
    <source>
    </source>
</evidence>
<evidence type="ECO:0000305" key="9"/>
<evidence type="ECO:0000305" key="10">
    <source>
    </source>
</evidence>
<gene>
    <name type="primary">Pcsk4</name>
    <name type="synonym">Nec-3</name>
    <name type="synonym">Nec3</name>
</gene>
<protein>
    <recommendedName>
        <fullName>Proprotein convertase subtilisin/kexin type 4</fullName>
        <shortName>PC4</shortName>
        <ecNumber>3.4.21.-</ecNumber>
    </recommendedName>
    <alternativeName>
        <fullName>KEX2-like endoprotease 3</fullName>
    </alternativeName>
    <alternativeName>
        <fullName>Neuroendocrine convertase 3</fullName>
        <shortName>NEC 3</shortName>
    </alternativeName>
    <alternativeName>
        <fullName>Prohormone convertase 3</fullName>
    </alternativeName>
</protein>
<reference key="1">
    <citation type="journal article" date="1992" name="Mol. Endocrinol.">
        <title>Testicular expression of PC4 in the rat: molecular diversity of a novel germ cell-specific Kex2/subtilisin-like proprotein convertase.</title>
        <authorList>
            <person name="Seidah N.G."/>
            <person name="Day R."/>
            <person name="Hamelin J."/>
            <person name="Gaspar A."/>
            <person name="Collard M.W."/>
            <person name="Chretien M."/>
        </authorList>
    </citation>
    <scope>NUCLEOTIDE SEQUENCE [MRNA] (ISOFORMS 1; 2; 3; 4 AND 5)</scope>
    <scope>TISSUE SPECIFICITY</scope>
    <scope>DEVELOPMENTAL STAGE</scope>
    <source>
        <tissue>Testis</tissue>
    </source>
</reference>
<reference key="2">
    <citation type="journal article" date="2004" name="Genome Res.">
        <title>The status, quality, and expansion of the NIH full-length cDNA project: the Mammalian Gene Collection (MGC).</title>
        <authorList>
            <consortium name="The MGC Project Team"/>
        </authorList>
    </citation>
    <scope>NUCLEOTIDE SEQUENCE [LARGE SCALE MRNA] (ISOFORM 4)</scope>
    <source>
        <tissue>Testis</tissue>
    </source>
</reference>
<reference key="3">
    <citation type="journal article" date="2011" name="Mol. Cell. Biochem.">
        <title>The precursor to the germ cell-specific PCSK4 proteinase is inefficiently activated in transfected somatic cells: evidence of interaction with the BiP chaperone.</title>
        <authorList>
            <person name="Gyamera-Acheampong C."/>
            <person name="Sirois F."/>
            <person name="Denis N.J."/>
            <person name="Mishra P."/>
            <person name="Figeys D."/>
            <person name="Basak A."/>
            <person name="Mbikay M."/>
        </authorList>
    </citation>
    <scope>SUBCELLULAR LOCATION</scope>
</reference>
<sequence>MRPSQTALWLGLVLSLALLAVGWASARPPIYVSSWAVRVTKGYQEAERLARKFGFVNLGQIFPDDQYFHLRHRGVAQQSLTPHWGHRLRLKKEPKVRWFEQQTLRRRVKRSLVVPTDPWFSKQWYMNKEIEQDLNILKVWNQGLTGRGVVVSILDDGIEKDHPDLWANYDPLASYDFNDYDPDPQPRYTPNDENRHGTRCAGEVSATANNGFCGAGVAFNARIGGVRMLDGAITDIVEAQSLSLQPQHIHIYSASWGPEDDGRTVDGPGLLTQEAFRRGVTKGRQGLGTLFIWASGNGGLHYDNCNCDGYTNSIHTLSVGSTTRQGRVPWYSEACASTFTTTFSSGVVTDPQIVTTDLHHQCTDKHTGTSASAPLAAGMIALALEANPLLTWRDLQHLVVRASRPAQLQAEDWRINGVGRQVSHHYGYGLLDAGLLVDLARVWLPTKPQKKCTIRVVHTPTPILPRMLVPKNVTVCCDGSRRRLIRSLEHVQVQLSLSYSRRGDLEIFLTSPMGTRSTLVAIRPLDISGQGYNNWIFMSTHYWDEDPQGLWTLGLENKGYYYNTGTLYYCTLLLYGTAEDMTARPQTPQESHCPLSIVAELCLISSKQWWWLYSHTQQPVTKGQDSCHPPTTPARQLDQRLHCLFPAPHAGSASEPLQGLSPLAAILAISLGPWCCPC</sequence>
<feature type="signal peptide" evidence="3">
    <location>
        <begin position="1"/>
        <end position="26"/>
    </location>
</feature>
<feature type="propeptide" id="PRO_0000027100" evidence="3">
    <location>
        <begin position="27"/>
        <end position="110"/>
    </location>
</feature>
<feature type="chain" id="PRO_0000027101" description="Proprotein convertase subtilisin/kexin type 4">
    <location>
        <begin position="111"/>
        <end position="678"/>
    </location>
</feature>
<feature type="domain" description="Peptidase S8" evidence="5">
    <location>
        <begin position="123"/>
        <end position="437"/>
    </location>
</feature>
<feature type="domain" description="P/Homo B" evidence="4">
    <location>
        <begin position="446"/>
        <end position="580"/>
    </location>
</feature>
<feature type="active site" description="Charge relay system" evidence="5">
    <location>
        <position position="155"/>
    </location>
</feature>
<feature type="active site" description="Charge relay system" evidence="5">
    <location>
        <position position="196"/>
    </location>
</feature>
<feature type="active site" description="Charge relay system" evidence="5">
    <location>
        <position position="370"/>
    </location>
</feature>
<feature type="glycosylation site" description="N-linked (GlcNAc...) asparagine" evidence="3">
    <location>
        <position position="472"/>
    </location>
</feature>
<feature type="splice variant" id="VSP_011274" description="In isoform 3." evidence="7">
    <original>ESHCPLSIVAELCLISSKQWWWLYSHTQQPVTKGQDSCHPPTTPARQLDQRLHCLFPAPHAGSASEPLQGLSPLAAILAISLGPWCCPC</original>
    <variation>VTSCAHACAEGHRGAVPGKSLSPLHCGRTLPHLQQAVVVALQPHTAASDQGTGQLSPSYHTCSAA</variation>
    <location>
        <begin position="590"/>
        <end position="678"/>
    </location>
</feature>
<feature type="splice variant" id="VSP_011275" description="In isoform 4." evidence="7 8">
    <original>ESHCPLSIVAELCLISSKQWWWLYSHTQQPVTKGQDSCHPPTTPARQLDQRLHCLFPAPHAGSASEPLQGLSPLAAILAISLGPWCCPC</original>
    <variation>KVIVPSPLWQNSASSPASSGGGSTATHSSQ</variation>
    <location>
        <begin position="590"/>
        <end position="678"/>
    </location>
</feature>
<feature type="splice variant" id="VSP_011276" description="In isoform 5." evidence="7">
    <original>ESHCPLSIVAELCLISSKQWWWLYSHTQQPVTKGQDSCHPPTTPARQLDQRLHCLFPAPHAGSASEPLQGLSPLAAILAISLGPWCCPC</original>
    <variation>NSASSPASSGGGSTATHSSQ</variation>
    <location>
        <begin position="590"/>
        <end position="678"/>
    </location>
</feature>
<feature type="splice variant" id="VSP_011273" description="In isoform 2." evidence="7">
    <location>
        <begin position="590"/>
        <end position="599"/>
    </location>
</feature>
<dbReference type="EC" id="3.4.21.-"/>
<dbReference type="EMBL" id="L14937">
    <property type="protein sequence ID" value="AAA41814.1"/>
    <property type="molecule type" value="mRNA"/>
</dbReference>
<dbReference type="EMBL" id="L14937">
    <property type="protein sequence ID" value="AAA41815.1"/>
    <property type="molecule type" value="mRNA"/>
</dbReference>
<dbReference type="EMBL" id="L14937">
    <property type="protein sequence ID" value="AAA41816.1"/>
    <property type="molecule type" value="mRNA"/>
</dbReference>
<dbReference type="EMBL" id="BC097288">
    <property type="protein sequence ID" value="AAH97288.1"/>
    <property type="molecule type" value="mRNA"/>
</dbReference>
<dbReference type="PIR" id="A45357">
    <property type="entry name" value="A45357"/>
</dbReference>
<dbReference type="RefSeq" id="NP_598243.1">
    <molecule id="Q78EH2-3"/>
    <property type="nucleotide sequence ID" value="NM_133559.1"/>
</dbReference>
<dbReference type="SMR" id="Q78EH2"/>
<dbReference type="FunCoup" id="Q78EH2">
    <property type="interactions" value="4"/>
</dbReference>
<dbReference type="STRING" id="10116.ENSRNOP00000022358"/>
<dbReference type="MEROPS" id="S08.074"/>
<dbReference type="GlyCosmos" id="Q78EH2">
    <property type="glycosylation" value="1 site, No reported glycans"/>
</dbReference>
<dbReference type="GlyGen" id="Q78EH2">
    <property type="glycosylation" value="1 site"/>
</dbReference>
<dbReference type="PhosphoSitePlus" id="Q78EH2"/>
<dbReference type="PaxDb" id="10116-ENSRNOP00000022358"/>
<dbReference type="GeneID" id="171085"/>
<dbReference type="KEGG" id="rno:171085"/>
<dbReference type="UCSC" id="RGD:620325">
    <molecule id="Q78EH2-1"/>
    <property type="organism name" value="rat"/>
</dbReference>
<dbReference type="AGR" id="RGD:620325"/>
<dbReference type="CTD" id="54760"/>
<dbReference type="RGD" id="620325">
    <property type="gene designation" value="Pcsk4"/>
</dbReference>
<dbReference type="eggNOG" id="KOG3525">
    <property type="taxonomic scope" value="Eukaryota"/>
</dbReference>
<dbReference type="InParanoid" id="Q78EH2"/>
<dbReference type="OrthoDB" id="46548at9989"/>
<dbReference type="PhylomeDB" id="Q78EH2"/>
<dbReference type="BRENDA" id="3.4.21.B24">
    <property type="organism ID" value="5301"/>
</dbReference>
<dbReference type="BRENDA" id="3.4.21.B25">
    <property type="organism ID" value="5301"/>
</dbReference>
<dbReference type="PRO" id="PR:Q78EH2"/>
<dbReference type="Proteomes" id="UP000002494">
    <property type="component" value="Unplaced"/>
</dbReference>
<dbReference type="GO" id="GO:0002080">
    <property type="term" value="C:acrosomal membrane"/>
    <property type="evidence" value="ECO:0000250"/>
    <property type="project" value="UniProtKB"/>
</dbReference>
<dbReference type="GO" id="GO:0001669">
    <property type="term" value="C:acrosomal vesicle"/>
    <property type="evidence" value="ECO:0000250"/>
    <property type="project" value="UniProtKB"/>
</dbReference>
<dbReference type="GO" id="GO:0000139">
    <property type="term" value="C:Golgi membrane"/>
    <property type="evidence" value="ECO:0000318"/>
    <property type="project" value="GO_Central"/>
</dbReference>
<dbReference type="GO" id="GO:0005802">
    <property type="term" value="C:trans-Golgi network"/>
    <property type="evidence" value="ECO:0000318"/>
    <property type="project" value="GO_Central"/>
</dbReference>
<dbReference type="GO" id="GO:0004252">
    <property type="term" value="F:serine-type endopeptidase activity"/>
    <property type="evidence" value="ECO:0000318"/>
    <property type="project" value="GO_Central"/>
</dbReference>
<dbReference type="GO" id="GO:0007340">
    <property type="term" value="P:acrosome reaction"/>
    <property type="evidence" value="ECO:0000250"/>
    <property type="project" value="UniProtKB"/>
</dbReference>
<dbReference type="GO" id="GO:0007339">
    <property type="term" value="P:binding of sperm to zona pellucida"/>
    <property type="evidence" value="ECO:0000250"/>
    <property type="project" value="UniProtKB"/>
</dbReference>
<dbReference type="GO" id="GO:0009566">
    <property type="term" value="P:fertilization"/>
    <property type="evidence" value="ECO:0000250"/>
    <property type="project" value="UniProtKB"/>
</dbReference>
<dbReference type="GO" id="GO:0016486">
    <property type="term" value="P:peptide hormone processing"/>
    <property type="evidence" value="ECO:0000318"/>
    <property type="project" value="GO_Central"/>
</dbReference>
<dbReference type="GO" id="GO:0016485">
    <property type="term" value="P:protein processing"/>
    <property type="evidence" value="ECO:0000250"/>
    <property type="project" value="UniProtKB"/>
</dbReference>
<dbReference type="GO" id="GO:0022414">
    <property type="term" value="P:reproductive process"/>
    <property type="evidence" value="ECO:0000250"/>
    <property type="project" value="UniProtKB"/>
</dbReference>
<dbReference type="GO" id="GO:0048240">
    <property type="term" value="P:sperm capacitation"/>
    <property type="evidence" value="ECO:0000250"/>
    <property type="project" value="UniProtKB"/>
</dbReference>
<dbReference type="CDD" id="cd04059">
    <property type="entry name" value="Peptidases_S8_Protein_convertases_Kexins_Furin-like"/>
    <property type="match status" value="1"/>
</dbReference>
<dbReference type="FunFam" id="3.40.50.200:FF:000001">
    <property type="entry name" value="Furin 2, isoform B"/>
    <property type="match status" value="1"/>
</dbReference>
<dbReference type="FunFam" id="2.60.120.260:FF:000034">
    <property type="entry name" value="furin isoform X2"/>
    <property type="match status" value="1"/>
</dbReference>
<dbReference type="FunFam" id="3.30.70.850:FF:000001">
    <property type="entry name" value="Proprotein convertase subtilisin/kexin type 5"/>
    <property type="match status" value="1"/>
</dbReference>
<dbReference type="Gene3D" id="2.60.120.260">
    <property type="entry name" value="Galactose-binding domain-like"/>
    <property type="match status" value="1"/>
</dbReference>
<dbReference type="Gene3D" id="3.30.70.850">
    <property type="entry name" value="Peptidase S8, pro-domain"/>
    <property type="match status" value="1"/>
</dbReference>
<dbReference type="Gene3D" id="3.40.50.200">
    <property type="entry name" value="Peptidase S8/S53 domain"/>
    <property type="match status" value="1"/>
</dbReference>
<dbReference type="InterPro" id="IPR008979">
    <property type="entry name" value="Galactose-bd-like_sf"/>
</dbReference>
<dbReference type="InterPro" id="IPR034182">
    <property type="entry name" value="Kexin/furin"/>
</dbReference>
<dbReference type="InterPro" id="IPR002884">
    <property type="entry name" value="P_dom"/>
</dbReference>
<dbReference type="InterPro" id="IPR000209">
    <property type="entry name" value="Peptidase_S8/S53_dom"/>
</dbReference>
<dbReference type="InterPro" id="IPR036852">
    <property type="entry name" value="Peptidase_S8/S53_dom_sf"/>
</dbReference>
<dbReference type="InterPro" id="IPR023827">
    <property type="entry name" value="Peptidase_S8_Asp-AS"/>
</dbReference>
<dbReference type="InterPro" id="IPR022398">
    <property type="entry name" value="Peptidase_S8_His-AS"/>
</dbReference>
<dbReference type="InterPro" id="IPR023828">
    <property type="entry name" value="Peptidase_S8_Ser-AS"/>
</dbReference>
<dbReference type="InterPro" id="IPR015500">
    <property type="entry name" value="Peptidase_S8_subtilisin-rel"/>
</dbReference>
<dbReference type="InterPro" id="IPR032815">
    <property type="entry name" value="S8_pro-domain"/>
</dbReference>
<dbReference type="InterPro" id="IPR038466">
    <property type="entry name" value="S8_pro-domain_sf"/>
</dbReference>
<dbReference type="PANTHER" id="PTHR42884">
    <property type="entry name" value="PROPROTEIN CONVERTASE SUBTILISIN/KEXIN-RELATED"/>
    <property type="match status" value="1"/>
</dbReference>
<dbReference type="PANTHER" id="PTHR42884:SF16">
    <property type="entry name" value="PROPROTEIN CONVERTASE SUBTILISIN_KEXIN TYPE 4"/>
    <property type="match status" value="1"/>
</dbReference>
<dbReference type="Pfam" id="PF01483">
    <property type="entry name" value="P_proprotein"/>
    <property type="match status" value="1"/>
</dbReference>
<dbReference type="Pfam" id="PF00082">
    <property type="entry name" value="Peptidase_S8"/>
    <property type="match status" value="1"/>
</dbReference>
<dbReference type="Pfam" id="PF16470">
    <property type="entry name" value="S8_pro-domain"/>
    <property type="match status" value="1"/>
</dbReference>
<dbReference type="PRINTS" id="PR00723">
    <property type="entry name" value="SUBTILISIN"/>
</dbReference>
<dbReference type="SUPFAM" id="SSF49785">
    <property type="entry name" value="Galactose-binding domain-like"/>
    <property type="match status" value="1"/>
</dbReference>
<dbReference type="SUPFAM" id="SSF54897">
    <property type="entry name" value="Protease propeptides/inhibitors"/>
    <property type="match status" value="1"/>
</dbReference>
<dbReference type="SUPFAM" id="SSF52743">
    <property type="entry name" value="Subtilisin-like"/>
    <property type="match status" value="1"/>
</dbReference>
<dbReference type="PROSITE" id="PS51829">
    <property type="entry name" value="P_HOMO_B"/>
    <property type="match status" value="1"/>
</dbReference>
<dbReference type="PROSITE" id="PS51892">
    <property type="entry name" value="SUBTILASE"/>
    <property type="match status" value="1"/>
</dbReference>
<dbReference type="PROSITE" id="PS00136">
    <property type="entry name" value="SUBTILASE_ASP"/>
    <property type="match status" value="1"/>
</dbReference>
<dbReference type="PROSITE" id="PS00137">
    <property type="entry name" value="SUBTILASE_HIS"/>
    <property type="match status" value="1"/>
</dbReference>
<dbReference type="PROSITE" id="PS00138">
    <property type="entry name" value="SUBTILASE_SER"/>
    <property type="match status" value="1"/>
</dbReference>
<keyword id="KW-0025">Alternative splicing</keyword>
<keyword id="KW-0165">Cleavage on pair of basic residues</keyword>
<keyword id="KW-0968">Cytoplasmic vesicle</keyword>
<keyword id="KW-0325">Glycoprotein</keyword>
<keyword id="KW-0378">Hydrolase</keyword>
<keyword id="KW-0472">Membrane</keyword>
<keyword id="KW-0645">Protease</keyword>
<keyword id="KW-1185">Reference proteome</keyword>
<keyword id="KW-0720">Serine protease</keyword>
<keyword id="KW-0732">Signal</keyword>
<keyword id="KW-0865">Zymogen</keyword>